<reference key="1">
    <citation type="journal article" date="2009" name="PLoS Genet.">
        <title>Organised genome dynamics in the Escherichia coli species results in highly diverse adaptive paths.</title>
        <authorList>
            <person name="Touchon M."/>
            <person name="Hoede C."/>
            <person name="Tenaillon O."/>
            <person name="Barbe V."/>
            <person name="Baeriswyl S."/>
            <person name="Bidet P."/>
            <person name="Bingen E."/>
            <person name="Bonacorsi S."/>
            <person name="Bouchier C."/>
            <person name="Bouvet O."/>
            <person name="Calteau A."/>
            <person name="Chiapello H."/>
            <person name="Clermont O."/>
            <person name="Cruveiller S."/>
            <person name="Danchin A."/>
            <person name="Diard M."/>
            <person name="Dossat C."/>
            <person name="Karoui M.E."/>
            <person name="Frapy E."/>
            <person name="Garry L."/>
            <person name="Ghigo J.M."/>
            <person name="Gilles A.M."/>
            <person name="Johnson J."/>
            <person name="Le Bouguenec C."/>
            <person name="Lescat M."/>
            <person name="Mangenot S."/>
            <person name="Martinez-Jehanne V."/>
            <person name="Matic I."/>
            <person name="Nassif X."/>
            <person name="Oztas S."/>
            <person name="Petit M.A."/>
            <person name="Pichon C."/>
            <person name="Rouy Z."/>
            <person name="Ruf C.S."/>
            <person name="Schneider D."/>
            <person name="Tourret J."/>
            <person name="Vacherie B."/>
            <person name="Vallenet D."/>
            <person name="Medigue C."/>
            <person name="Rocha E.P.C."/>
            <person name="Denamur E."/>
        </authorList>
    </citation>
    <scope>NUCLEOTIDE SEQUENCE [LARGE SCALE GENOMIC DNA]</scope>
    <source>
        <strain>S88 / ExPEC</strain>
    </source>
</reference>
<protein>
    <recommendedName>
        <fullName evidence="1">UPF0145 protein YbjQ</fullName>
    </recommendedName>
</protein>
<gene>
    <name evidence="1" type="primary">ybjQ</name>
    <name type="ordered locus">ECS88_0887</name>
</gene>
<keyword id="KW-1185">Reference proteome</keyword>
<sequence length="107" mass="11437">MQFSTTPTLEGQTIVEYCGVVTGEAILGANIFRDFFAGIRDIVGGRSGAYEKELRKAREIAFEELGSQARALGADAVVGIDIDYETVGQNGSMLMVSVSGTAVKTRR</sequence>
<comment type="similarity">
    <text evidence="1">Belongs to the UPF0145 family.</text>
</comment>
<organism>
    <name type="scientific">Escherichia coli O45:K1 (strain S88 / ExPEC)</name>
    <dbReference type="NCBI Taxonomy" id="585035"/>
    <lineage>
        <taxon>Bacteria</taxon>
        <taxon>Pseudomonadati</taxon>
        <taxon>Pseudomonadota</taxon>
        <taxon>Gammaproteobacteria</taxon>
        <taxon>Enterobacterales</taxon>
        <taxon>Enterobacteriaceae</taxon>
        <taxon>Escherichia</taxon>
    </lineage>
</organism>
<name>YBJQ_ECO45</name>
<feature type="chain" id="PRO_1000119989" description="UPF0145 protein YbjQ">
    <location>
        <begin position="1"/>
        <end position="107"/>
    </location>
</feature>
<proteinExistence type="inferred from homology"/>
<accession>B7MHH1</accession>
<evidence type="ECO:0000255" key="1">
    <source>
        <dbReference type="HAMAP-Rule" id="MF_00338"/>
    </source>
</evidence>
<dbReference type="EMBL" id="CU928161">
    <property type="protein sequence ID" value="CAR02222.1"/>
    <property type="molecule type" value="Genomic_DNA"/>
</dbReference>
<dbReference type="RefSeq" id="WP_001160737.1">
    <property type="nucleotide sequence ID" value="NC_011742.1"/>
</dbReference>
<dbReference type="SMR" id="B7MHH1"/>
<dbReference type="KEGG" id="ecz:ECS88_0887"/>
<dbReference type="HOGENOM" id="CLU_117144_3_0_6"/>
<dbReference type="Proteomes" id="UP000000747">
    <property type="component" value="Chromosome"/>
</dbReference>
<dbReference type="Gene3D" id="3.30.110.70">
    <property type="entry name" value="Hypothetical protein apc22750. Chain B"/>
    <property type="match status" value="1"/>
</dbReference>
<dbReference type="HAMAP" id="MF_00338">
    <property type="entry name" value="UPF0145"/>
    <property type="match status" value="1"/>
</dbReference>
<dbReference type="InterPro" id="IPR035439">
    <property type="entry name" value="UPF0145_dom_sf"/>
</dbReference>
<dbReference type="InterPro" id="IPR002765">
    <property type="entry name" value="UPF0145_YbjQ-like"/>
</dbReference>
<dbReference type="NCBIfam" id="NF002776">
    <property type="entry name" value="PRK02877.1"/>
    <property type="match status" value="1"/>
</dbReference>
<dbReference type="PANTHER" id="PTHR34068">
    <property type="entry name" value="UPF0145 PROTEIN YBJQ"/>
    <property type="match status" value="1"/>
</dbReference>
<dbReference type="PANTHER" id="PTHR34068:SF1">
    <property type="entry name" value="UPF0145 PROTEIN YBJQ"/>
    <property type="match status" value="1"/>
</dbReference>
<dbReference type="Pfam" id="PF01906">
    <property type="entry name" value="YbjQ_1"/>
    <property type="match status" value="1"/>
</dbReference>
<dbReference type="SUPFAM" id="SSF117782">
    <property type="entry name" value="YbjQ-like"/>
    <property type="match status" value="1"/>
</dbReference>